<proteinExistence type="inferred from homology"/>
<accession>A5VB15</accession>
<dbReference type="EC" id="5.4.2.11" evidence="1"/>
<dbReference type="EMBL" id="CP000699">
    <property type="protein sequence ID" value="ABQ69481.1"/>
    <property type="molecule type" value="Genomic_DNA"/>
</dbReference>
<dbReference type="SMR" id="A5VB15"/>
<dbReference type="STRING" id="392499.Swit_3133"/>
<dbReference type="PaxDb" id="392499-Swit_3133"/>
<dbReference type="KEGG" id="swi:Swit_3133"/>
<dbReference type="eggNOG" id="COG0588">
    <property type="taxonomic scope" value="Bacteria"/>
</dbReference>
<dbReference type="HOGENOM" id="CLU_033323_1_1_5"/>
<dbReference type="OrthoDB" id="9781415at2"/>
<dbReference type="UniPathway" id="UPA00109">
    <property type="reaction ID" value="UER00186"/>
</dbReference>
<dbReference type="Proteomes" id="UP000001989">
    <property type="component" value="Chromosome"/>
</dbReference>
<dbReference type="GO" id="GO:0004619">
    <property type="term" value="F:phosphoglycerate mutase activity"/>
    <property type="evidence" value="ECO:0007669"/>
    <property type="project" value="UniProtKB-EC"/>
</dbReference>
<dbReference type="GO" id="GO:0006094">
    <property type="term" value="P:gluconeogenesis"/>
    <property type="evidence" value="ECO:0007669"/>
    <property type="project" value="UniProtKB-UniRule"/>
</dbReference>
<dbReference type="GO" id="GO:0006096">
    <property type="term" value="P:glycolytic process"/>
    <property type="evidence" value="ECO:0007669"/>
    <property type="project" value="UniProtKB-UniRule"/>
</dbReference>
<dbReference type="CDD" id="cd07067">
    <property type="entry name" value="HP_PGM_like"/>
    <property type="match status" value="1"/>
</dbReference>
<dbReference type="FunFam" id="3.40.50.1240:FF:000003">
    <property type="entry name" value="2,3-bisphosphoglycerate-dependent phosphoglycerate mutase"/>
    <property type="match status" value="1"/>
</dbReference>
<dbReference type="Gene3D" id="3.40.50.1240">
    <property type="entry name" value="Phosphoglycerate mutase-like"/>
    <property type="match status" value="1"/>
</dbReference>
<dbReference type="HAMAP" id="MF_01039">
    <property type="entry name" value="PGAM_GpmA"/>
    <property type="match status" value="1"/>
</dbReference>
<dbReference type="InterPro" id="IPR013078">
    <property type="entry name" value="His_Pase_superF_clade-1"/>
</dbReference>
<dbReference type="InterPro" id="IPR029033">
    <property type="entry name" value="His_PPase_superfam"/>
</dbReference>
<dbReference type="InterPro" id="IPR001345">
    <property type="entry name" value="PG/BPGM_mutase_AS"/>
</dbReference>
<dbReference type="InterPro" id="IPR005952">
    <property type="entry name" value="Phosphogly_mut1"/>
</dbReference>
<dbReference type="NCBIfam" id="TIGR01258">
    <property type="entry name" value="pgm_1"/>
    <property type="match status" value="1"/>
</dbReference>
<dbReference type="NCBIfam" id="NF010713">
    <property type="entry name" value="PRK14115.1"/>
    <property type="match status" value="1"/>
</dbReference>
<dbReference type="PANTHER" id="PTHR11931">
    <property type="entry name" value="PHOSPHOGLYCERATE MUTASE"/>
    <property type="match status" value="1"/>
</dbReference>
<dbReference type="Pfam" id="PF00300">
    <property type="entry name" value="His_Phos_1"/>
    <property type="match status" value="1"/>
</dbReference>
<dbReference type="PIRSF" id="PIRSF000709">
    <property type="entry name" value="6PFK_2-Ptase"/>
    <property type="match status" value="1"/>
</dbReference>
<dbReference type="SMART" id="SM00855">
    <property type="entry name" value="PGAM"/>
    <property type="match status" value="1"/>
</dbReference>
<dbReference type="SUPFAM" id="SSF53254">
    <property type="entry name" value="Phosphoglycerate mutase-like"/>
    <property type="match status" value="1"/>
</dbReference>
<dbReference type="PROSITE" id="PS00175">
    <property type="entry name" value="PG_MUTASE"/>
    <property type="match status" value="1"/>
</dbReference>
<keyword id="KW-0312">Gluconeogenesis</keyword>
<keyword id="KW-0324">Glycolysis</keyword>
<keyword id="KW-0413">Isomerase</keyword>
<keyword id="KW-1185">Reference proteome</keyword>
<sequence length="228" mass="25746">MPTLVLIRHGQSAWNLENRFTGWWDVNLTDQGIAEAKAAGELMAAKGLDFDQCYTSFQTRAIKTLNIALEAMGRLWLPVEKDWRLNERHYGGLTGLNKAETAARHGDAQVKVWRRSFDIPPPVLEPGGEFDLSKDRRYAGIAIPSTESLKDTIARVLPYWEERIAPDLKAGKRVVISAHGNSLRALVKHLSHIPDDEITELEIPTGQPIVYELADDLTARDRYYLSER</sequence>
<protein>
    <recommendedName>
        <fullName evidence="1">2,3-bisphosphoglycerate-dependent phosphoglycerate mutase</fullName>
        <shortName evidence="1">BPG-dependent PGAM</shortName>
        <shortName evidence="1">PGAM</shortName>
        <shortName evidence="1">Phosphoglyceromutase</shortName>
        <shortName evidence="1">dPGM</shortName>
        <ecNumber evidence="1">5.4.2.11</ecNumber>
    </recommendedName>
</protein>
<gene>
    <name evidence="1" type="primary">gpmA</name>
    <name type="ordered locus">Swit_3133</name>
</gene>
<name>GPMA_RHIWR</name>
<reference key="1">
    <citation type="journal article" date="2010" name="J. Bacteriol.">
        <title>Genome sequence of the dioxin-mineralizing bacterium Sphingomonas wittichii RW1.</title>
        <authorList>
            <person name="Miller T.R."/>
            <person name="Delcher A.L."/>
            <person name="Salzberg S.L."/>
            <person name="Saunders E."/>
            <person name="Detter J.C."/>
            <person name="Halden R.U."/>
        </authorList>
    </citation>
    <scope>NUCLEOTIDE SEQUENCE [LARGE SCALE GENOMIC DNA]</scope>
    <source>
        <strain>DSM 6014 / CCUG 31198 / JCM 15750 / NBRC 105917 / EY 4224 / RW1</strain>
    </source>
</reference>
<evidence type="ECO:0000255" key="1">
    <source>
        <dbReference type="HAMAP-Rule" id="MF_01039"/>
    </source>
</evidence>
<organism>
    <name type="scientific">Rhizorhabdus wittichii (strain DSM 6014 / CCUG 31198 / JCM 15750 / NBRC 105917 / EY 4224 / RW1)</name>
    <name type="common">Sphingomonas wittichii</name>
    <dbReference type="NCBI Taxonomy" id="392499"/>
    <lineage>
        <taxon>Bacteria</taxon>
        <taxon>Pseudomonadati</taxon>
        <taxon>Pseudomonadota</taxon>
        <taxon>Alphaproteobacteria</taxon>
        <taxon>Sphingomonadales</taxon>
        <taxon>Sphingomonadaceae</taxon>
        <taxon>Rhizorhabdus</taxon>
    </lineage>
</organism>
<comment type="function">
    <text evidence="1">Catalyzes the interconversion of 2-phosphoglycerate and 3-phosphoglycerate.</text>
</comment>
<comment type="catalytic activity">
    <reaction evidence="1">
        <text>(2R)-2-phosphoglycerate = (2R)-3-phosphoglycerate</text>
        <dbReference type="Rhea" id="RHEA:15901"/>
        <dbReference type="ChEBI" id="CHEBI:58272"/>
        <dbReference type="ChEBI" id="CHEBI:58289"/>
        <dbReference type="EC" id="5.4.2.11"/>
    </reaction>
</comment>
<comment type="pathway">
    <text evidence="1">Carbohydrate degradation; glycolysis; pyruvate from D-glyceraldehyde 3-phosphate: step 3/5.</text>
</comment>
<comment type="subunit">
    <text evidence="1">Homodimer.</text>
</comment>
<comment type="similarity">
    <text evidence="1">Belongs to the phosphoglycerate mutase family. BPG-dependent PGAM subfamily.</text>
</comment>
<feature type="chain" id="PRO_1000064100" description="2,3-bisphosphoglycerate-dependent phosphoglycerate mutase">
    <location>
        <begin position="1"/>
        <end position="228"/>
    </location>
</feature>
<feature type="active site" description="Tele-phosphohistidine intermediate" evidence="1">
    <location>
        <position position="9"/>
    </location>
</feature>
<feature type="active site" description="Proton donor/acceptor" evidence="1">
    <location>
        <position position="87"/>
    </location>
</feature>
<feature type="binding site" evidence="1">
    <location>
        <begin position="8"/>
        <end position="15"/>
    </location>
    <ligand>
        <name>substrate</name>
    </ligand>
</feature>
<feature type="binding site" evidence="1">
    <location>
        <begin position="21"/>
        <end position="22"/>
    </location>
    <ligand>
        <name>substrate</name>
    </ligand>
</feature>
<feature type="binding site" evidence="1">
    <location>
        <position position="60"/>
    </location>
    <ligand>
        <name>substrate</name>
    </ligand>
</feature>
<feature type="binding site" evidence="1">
    <location>
        <begin position="87"/>
        <end position="90"/>
    </location>
    <ligand>
        <name>substrate</name>
    </ligand>
</feature>
<feature type="binding site" evidence="1">
    <location>
        <position position="98"/>
    </location>
    <ligand>
        <name>substrate</name>
    </ligand>
</feature>
<feature type="binding site" evidence="1">
    <location>
        <begin position="114"/>
        <end position="115"/>
    </location>
    <ligand>
        <name>substrate</name>
    </ligand>
</feature>
<feature type="binding site" evidence="1">
    <location>
        <begin position="180"/>
        <end position="181"/>
    </location>
    <ligand>
        <name>substrate</name>
    </ligand>
</feature>
<feature type="site" description="Transition state stabilizer" evidence="1">
    <location>
        <position position="179"/>
    </location>
</feature>